<keyword id="KW-0030">Aminoacyl-tRNA synthetase</keyword>
<keyword id="KW-0067">ATP-binding</keyword>
<keyword id="KW-0963">Cytoplasm</keyword>
<keyword id="KW-0436">Ligase</keyword>
<keyword id="KW-0479">Metal-binding</keyword>
<keyword id="KW-0547">Nucleotide-binding</keyword>
<keyword id="KW-0648">Protein biosynthesis</keyword>
<keyword id="KW-0694">RNA-binding</keyword>
<keyword id="KW-0820">tRNA-binding</keyword>
<keyword id="KW-0862">Zinc</keyword>
<protein>
    <recommendedName>
        <fullName evidence="1">Methionine--tRNA ligase</fullName>
        <ecNumber evidence="1">6.1.1.10</ecNumber>
    </recommendedName>
    <alternativeName>
        <fullName evidence="1">Methionyl-tRNA synthetase</fullName>
        <shortName evidence="1">MetRS</shortName>
    </alternativeName>
</protein>
<reference key="1">
    <citation type="journal article" date="2007" name="PLoS Genet.">
        <title>Genome analysis of Minibacterium massiliensis highlights the convergent evolution of water-living bacteria.</title>
        <authorList>
            <person name="Audic S."/>
            <person name="Robert C."/>
            <person name="Campagna B."/>
            <person name="Parinello H."/>
            <person name="Claverie J.-M."/>
            <person name="Raoult D."/>
            <person name="Drancourt M."/>
        </authorList>
    </citation>
    <scope>NUCLEOTIDE SEQUENCE [LARGE SCALE GENOMIC DNA]</scope>
    <source>
        <strain>Marseille</strain>
    </source>
</reference>
<comment type="function">
    <text evidence="1">Is required not only for elongation of protein synthesis but also for the initiation of all mRNA translation through initiator tRNA(fMet) aminoacylation.</text>
</comment>
<comment type="catalytic activity">
    <reaction evidence="1">
        <text>tRNA(Met) + L-methionine + ATP = L-methionyl-tRNA(Met) + AMP + diphosphate</text>
        <dbReference type="Rhea" id="RHEA:13481"/>
        <dbReference type="Rhea" id="RHEA-COMP:9667"/>
        <dbReference type="Rhea" id="RHEA-COMP:9698"/>
        <dbReference type="ChEBI" id="CHEBI:30616"/>
        <dbReference type="ChEBI" id="CHEBI:33019"/>
        <dbReference type="ChEBI" id="CHEBI:57844"/>
        <dbReference type="ChEBI" id="CHEBI:78442"/>
        <dbReference type="ChEBI" id="CHEBI:78530"/>
        <dbReference type="ChEBI" id="CHEBI:456215"/>
        <dbReference type="EC" id="6.1.1.10"/>
    </reaction>
</comment>
<comment type="cofactor">
    <cofactor evidence="1">
        <name>Zn(2+)</name>
        <dbReference type="ChEBI" id="CHEBI:29105"/>
    </cofactor>
    <text evidence="1">Binds 1 zinc ion per subunit.</text>
</comment>
<comment type="subunit">
    <text evidence="1">Homodimer.</text>
</comment>
<comment type="subcellular location">
    <subcellularLocation>
        <location evidence="1">Cytoplasm</location>
    </subcellularLocation>
</comment>
<comment type="similarity">
    <text evidence="1">Belongs to the class-I aminoacyl-tRNA synthetase family. MetG type 1 subfamily.</text>
</comment>
<name>SYM_JANMA</name>
<dbReference type="EC" id="6.1.1.10" evidence="1"/>
<dbReference type="EMBL" id="CP000269">
    <property type="protein sequence ID" value="ABR88404.1"/>
    <property type="molecule type" value="Genomic_DNA"/>
</dbReference>
<dbReference type="RefSeq" id="WP_012078969.1">
    <property type="nucleotide sequence ID" value="NC_009659.1"/>
</dbReference>
<dbReference type="SMR" id="A6SX05"/>
<dbReference type="STRING" id="375286.mma_1112"/>
<dbReference type="KEGG" id="mms:mma_1112"/>
<dbReference type="eggNOG" id="COG0073">
    <property type="taxonomic scope" value="Bacteria"/>
</dbReference>
<dbReference type="eggNOG" id="COG0143">
    <property type="taxonomic scope" value="Bacteria"/>
</dbReference>
<dbReference type="HOGENOM" id="CLU_009710_7_0_4"/>
<dbReference type="OrthoDB" id="9810191at2"/>
<dbReference type="Proteomes" id="UP000006388">
    <property type="component" value="Chromosome"/>
</dbReference>
<dbReference type="GO" id="GO:0005829">
    <property type="term" value="C:cytosol"/>
    <property type="evidence" value="ECO:0007669"/>
    <property type="project" value="TreeGrafter"/>
</dbReference>
<dbReference type="GO" id="GO:0005524">
    <property type="term" value="F:ATP binding"/>
    <property type="evidence" value="ECO:0007669"/>
    <property type="project" value="UniProtKB-UniRule"/>
</dbReference>
<dbReference type="GO" id="GO:0046872">
    <property type="term" value="F:metal ion binding"/>
    <property type="evidence" value="ECO:0007669"/>
    <property type="project" value="UniProtKB-KW"/>
</dbReference>
<dbReference type="GO" id="GO:0004825">
    <property type="term" value="F:methionine-tRNA ligase activity"/>
    <property type="evidence" value="ECO:0007669"/>
    <property type="project" value="UniProtKB-UniRule"/>
</dbReference>
<dbReference type="GO" id="GO:0000049">
    <property type="term" value="F:tRNA binding"/>
    <property type="evidence" value="ECO:0007669"/>
    <property type="project" value="UniProtKB-KW"/>
</dbReference>
<dbReference type="GO" id="GO:0006431">
    <property type="term" value="P:methionyl-tRNA aminoacylation"/>
    <property type="evidence" value="ECO:0007669"/>
    <property type="project" value="UniProtKB-UniRule"/>
</dbReference>
<dbReference type="CDD" id="cd07957">
    <property type="entry name" value="Anticodon_Ia_Met"/>
    <property type="match status" value="1"/>
</dbReference>
<dbReference type="CDD" id="cd00814">
    <property type="entry name" value="MetRS_core"/>
    <property type="match status" value="1"/>
</dbReference>
<dbReference type="CDD" id="cd02800">
    <property type="entry name" value="tRNA_bind_EcMetRS_like"/>
    <property type="match status" value="1"/>
</dbReference>
<dbReference type="FunFam" id="2.20.28.20:FF:000001">
    <property type="entry name" value="Methionine--tRNA ligase"/>
    <property type="match status" value="1"/>
</dbReference>
<dbReference type="FunFam" id="2.40.50.140:FF:000042">
    <property type="entry name" value="Methionine--tRNA ligase"/>
    <property type="match status" value="1"/>
</dbReference>
<dbReference type="Gene3D" id="3.40.50.620">
    <property type="entry name" value="HUPs"/>
    <property type="match status" value="1"/>
</dbReference>
<dbReference type="Gene3D" id="1.10.730.10">
    <property type="entry name" value="Isoleucyl-tRNA Synthetase, Domain 1"/>
    <property type="match status" value="1"/>
</dbReference>
<dbReference type="Gene3D" id="2.20.28.20">
    <property type="entry name" value="Methionyl-tRNA synthetase, Zn-domain"/>
    <property type="match status" value="1"/>
</dbReference>
<dbReference type="Gene3D" id="2.40.50.140">
    <property type="entry name" value="Nucleic acid-binding proteins"/>
    <property type="match status" value="1"/>
</dbReference>
<dbReference type="HAMAP" id="MF_00098">
    <property type="entry name" value="Met_tRNA_synth_type1"/>
    <property type="match status" value="1"/>
</dbReference>
<dbReference type="InterPro" id="IPR001412">
    <property type="entry name" value="aa-tRNA-synth_I_CS"/>
</dbReference>
<dbReference type="InterPro" id="IPR041872">
    <property type="entry name" value="Anticodon_Met"/>
</dbReference>
<dbReference type="InterPro" id="IPR013155">
    <property type="entry name" value="M/V/L/I-tRNA-synth_anticd-bd"/>
</dbReference>
<dbReference type="InterPro" id="IPR004495">
    <property type="entry name" value="Met-tRNA-synth_bsu_C"/>
</dbReference>
<dbReference type="InterPro" id="IPR023458">
    <property type="entry name" value="Met-tRNA_ligase_1"/>
</dbReference>
<dbReference type="InterPro" id="IPR014758">
    <property type="entry name" value="Met-tRNA_synth"/>
</dbReference>
<dbReference type="InterPro" id="IPR015413">
    <property type="entry name" value="Methionyl/Leucyl_tRNA_Synth"/>
</dbReference>
<dbReference type="InterPro" id="IPR033911">
    <property type="entry name" value="MetRS_core"/>
</dbReference>
<dbReference type="InterPro" id="IPR029038">
    <property type="entry name" value="MetRS_Zn"/>
</dbReference>
<dbReference type="InterPro" id="IPR012340">
    <property type="entry name" value="NA-bd_OB-fold"/>
</dbReference>
<dbReference type="InterPro" id="IPR014729">
    <property type="entry name" value="Rossmann-like_a/b/a_fold"/>
</dbReference>
<dbReference type="InterPro" id="IPR002547">
    <property type="entry name" value="tRNA-bd_dom"/>
</dbReference>
<dbReference type="InterPro" id="IPR009080">
    <property type="entry name" value="tRNAsynth_Ia_anticodon-bd"/>
</dbReference>
<dbReference type="NCBIfam" id="TIGR00398">
    <property type="entry name" value="metG"/>
    <property type="match status" value="1"/>
</dbReference>
<dbReference type="NCBIfam" id="TIGR00399">
    <property type="entry name" value="metG_C_term"/>
    <property type="match status" value="1"/>
</dbReference>
<dbReference type="NCBIfam" id="NF001100">
    <property type="entry name" value="PRK00133.1"/>
    <property type="match status" value="1"/>
</dbReference>
<dbReference type="PANTHER" id="PTHR45765">
    <property type="entry name" value="METHIONINE--TRNA LIGASE"/>
    <property type="match status" value="1"/>
</dbReference>
<dbReference type="PANTHER" id="PTHR45765:SF1">
    <property type="entry name" value="METHIONINE--TRNA LIGASE, CYTOPLASMIC"/>
    <property type="match status" value="1"/>
</dbReference>
<dbReference type="Pfam" id="PF08264">
    <property type="entry name" value="Anticodon_1"/>
    <property type="match status" value="1"/>
</dbReference>
<dbReference type="Pfam" id="PF09334">
    <property type="entry name" value="tRNA-synt_1g"/>
    <property type="match status" value="1"/>
</dbReference>
<dbReference type="Pfam" id="PF01588">
    <property type="entry name" value="tRNA_bind"/>
    <property type="match status" value="1"/>
</dbReference>
<dbReference type="PRINTS" id="PR01041">
    <property type="entry name" value="TRNASYNTHMET"/>
</dbReference>
<dbReference type="SUPFAM" id="SSF47323">
    <property type="entry name" value="Anticodon-binding domain of a subclass of class I aminoacyl-tRNA synthetases"/>
    <property type="match status" value="1"/>
</dbReference>
<dbReference type="SUPFAM" id="SSF57770">
    <property type="entry name" value="Methionyl-tRNA synthetase (MetRS), Zn-domain"/>
    <property type="match status" value="1"/>
</dbReference>
<dbReference type="SUPFAM" id="SSF50249">
    <property type="entry name" value="Nucleic acid-binding proteins"/>
    <property type="match status" value="1"/>
</dbReference>
<dbReference type="SUPFAM" id="SSF52374">
    <property type="entry name" value="Nucleotidylyl transferase"/>
    <property type="match status" value="1"/>
</dbReference>
<dbReference type="PROSITE" id="PS00178">
    <property type="entry name" value="AA_TRNA_LIGASE_I"/>
    <property type="match status" value="1"/>
</dbReference>
<dbReference type="PROSITE" id="PS50886">
    <property type="entry name" value="TRBD"/>
    <property type="match status" value="1"/>
</dbReference>
<evidence type="ECO:0000255" key="1">
    <source>
        <dbReference type="HAMAP-Rule" id="MF_00098"/>
    </source>
</evidence>
<feature type="chain" id="PRO_0000331841" description="Methionine--tRNA ligase">
    <location>
        <begin position="1"/>
        <end position="700"/>
    </location>
</feature>
<feature type="domain" description="tRNA-binding" evidence="1">
    <location>
        <begin position="594"/>
        <end position="700"/>
    </location>
</feature>
<feature type="short sequence motif" description="'HIGH' region">
    <location>
        <begin position="16"/>
        <end position="26"/>
    </location>
</feature>
<feature type="short sequence motif" description="'KMSKS' region">
    <location>
        <begin position="337"/>
        <end position="341"/>
    </location>
</feature>
<feature type="binding site" evidence="1">
    <location>
        <position position="148"/>
    </location>
    <ligand>
        <name>Zn(2+)</name>
        <dbReference type="ChEBI" id="CHEBI:29105"/>
    </ligand>
</feature>
<feature type="binding site" evidence="1">
    <location>
        <position position="151"/>
    </location>
    <ligand>
        <name>Zn(2+)</name>
        <dbReference type="ChEBI" id="CHEBI:29105"/>
    </ligand>
</feature>
<feature type="binding site" evidence="1">
    <location>
        <position position="161"/>
    </location>
    <ligand>
        <name>Zn(2+)</name>
        <dbReference type="ChEBI" id="CHEBI:29105"/>
    </ligand>
</feature>
<feature type="binding site" evidence="1">
    <location>
        <position position="164"/>
    </location>
    <ligand>
        <name>Zn(2+)</name>
        <dbReference type="ChEBI" id="CHEBI:29105"/>
    </ligand>
</feature>
<feature type="binding site" evidence="1">
    <location>
        <position position="340"/>
    </location>
    <ligand>
        <name>ATP</name>
        <dbReference type="ChEBI" id="CHEBI:30616"/>
    </ligand>
</feature>
<sequence>MSKPLPRKLFVTTALPYANGAFHVGHIMEYIQADIWVRFQRMQGNEVHFVGADDAHGAPIMIAAEKAGLTPQQFVANIAAGRKQYLDGFHIEFDNWSSTDSPENHELSREIYRRLRDDAKLITTKSVEQFYDPVKEMFLPDRYIKGECPKCGTKDQYGDSCENCSAVYAPTDLKHPYSTLTGATPVRKSSDHFFFRLSDPKCVAFLREWALDGQRLQSEVANKAKEWLEGEGGLGDWDISRDAPYFGIEIPDAPGKYFYVWLDAPVGYLATLKNYFDKTGRDFDAFMADPSTEQYHFIGKDITYFHTLFWPAMLKFADMKVPNNVFVHGFITVSGEKMSKSRGTGISPLRYLEIGMNPEWLRYYIAAKLSSKVEDIDFTSDDFIARVNSDLIGKYINIASRAAGFITKKFDGRVATDWATSDDAFLSRLRNVASEIQALYDQREYGKALRAIMEQADAINAYVDANKPWELAKDPAKEAALQEVCSRLLEAFRILTIYLKPVLPALAKQVEAQLNIAPLEWHHIITPLPHGHQINPYVHLMTRVEPKMLDALFDMPALVDATVGVPTSPSNKDGDTNGNGHAIESIAPEIKIDDFAKIDLRIAKIVNCEHVEGSDKLLRLTLDVGEGRMRNVFSGIKSAYKPEDLIGKLTVMVANLAPRKMKFGISEGMVLAASAADEKANPGIYILNPWPGAEPGMRVG</sequence>
<gene>
    <name evidence="1" type="primary">metG</name>
    <name type="ordered locus">mma_1112</name>
</gene>
<organism>
    <name type="scientific">Janthinobacterium sp. (strain Marseille)</name>
    <name type="common">Minibacterium massiliensis</name>
    <dbReference type="NCBI Taxonomy" id="375286"/>
    <lineage>
        <taxon>Bacteria</taxon>
        <taxon>Pseudomonadati</taxon>
        <taxon>Pseudomonadota</taxon>
        <taxon>Betaproteobacteria</taxon>
        <taxon>Burkholderiales</taxon>
        <taxon>Oxalobacteraceae</taxon>
        <taxon>Janthinobacterium</taxon>
    </lineage>
</organism>
<proteinExistence type="inferred from homology"/>
<accession>A6SX05</accession>